<name>GPH_SHIBS</name>
<accession>Q31VP9</accession>
<comment type="function">
    <text evidence="1">Specifically catalyzes the dephosphorylation of 2-phosphoglycolate. Is involved in the dissimilation of the intracellular 2-phosphoglycolate formed during the DNA repair of 3'-phosphoglycolate ends, a major class of DNA lesions induced by oxidative stress.</text>
</comment>
<comment type="catalytic activity">
    <reaction evidence="1">
        <text>2-phosphoglycolate + H2O = glycolate + phosphate</text>
        <dbReference type="Rhea" id="RHEA:14369"/>
        <dbReference type="ChEBI" id="CHEBI:15377"/>
        <dbReference type="ChEBI" id="CHEBI:29805"/>
        <dbReference type="ChEBI" id="CHEBI:43474"/>
        <dbReference type="ChEBI" id="CHEBI:58033"/>
        <dbReference type="EC" id="3.1.3.18"/>
    </reaction>
</comment>
<comment type="cofactor">
    <cofactor evidence="1">
        <name>Mg(2+)</name>
        <dbReference type="ChEBI" id="CHEBI:18420"/>
    </cofactor>
</comment>
<comment type="cofactor">
    <cofactor evidence="1">
        <name>chloride</name>
        <dbReference type="ChEBI" id="CHEBI:17996"/>
    </cofactor>
</comment>
<comment type="pathway">
    <text evidence="1">Organic acid metabolism; glycolate biosynthesis; glycolate from 2-phosphoglycolate: step 1/1.</text>
</comment>
<comment type="subunit">
    <text evidence="1">Monomer.</text>
</comment>
<comment type="similarity">
    <text evidence="1">Belongs to the HAD-like hydrolase superfamily. CbbY/CbbZ/Gph/YieH family.</text>
</comment>
<keyword id="KW-0119">Carbohydrate metabolism</keyword>
<keyword id="KW-0868">Chloride</keyword>
<keyword id="KW-0378">Hydrolase</keyword>
<keyword id="KW-0460">Magnesium</keyword>
<keyword id="KW-0479">Metal-binding</keyword>
<sequence length="252" mass="27374">MNKFEDIRGVAFDLDGTLVDSAPGLAAAVDMALYALELPVAGEERVITWIGNGADVLMERALAWARQERATLRKTMGKPPVDDDIPAEEQVRILRKLFDRYYSEVAEEGTFLFPHVADTLGALQAKGLPLGLVTNKPTPFVAPLLEALDIAKYFSVVIGGDDVQNKKPHPDPLLLVAERMGIAPQQMLFVGDSRNDIQAAKAAGCPSVGLTYGYNYGEAIDLSQPDVIYQSINDLLPALGLPHSENQESKND</sequence>
<proteinExistence type="inferred from homology"/>
<organism>
    <name type="scientific">Shigella boydii serotype 4 (strain Sb227)</name>
    <dbReference type="NCBI Taxonomy" id="300268"/>
    <lineage>
        <taxon>Bacteria</taxon>
        <taxon>Pseudomonadati</taxon>
        <taxon>Pseudomonadota</taxon>
        <taxon>Gammaproteobacteria</taxon>
        <taxon>Enterobacterales</taxon>
        <taxon>Enterobacteriaceae</taxon>
        <taxon>Shigella</taxon>
    </lineage>
</organism>
<feature type="chain" id="PRO_0000238177" description="Phosphoglycolate phosphatase">
    <location>
        <begin position="1"/>
        <end position="252"/>
    </location>
</feature>
<feature type="active site" description="Nucleophile" evidence="1">
    <location>
        <position position="13"/>
    </location>
</feature>
<feature type="binding site" evidence="1">
    <location>
        <position position="13"/>
    </location>
    <ligand>
        <name>Mg(2+)</name>
        <dbReference type="ChEBI" id="CHEBI:18420"/>
    </ligand>
</feature>
<feature type="binding site" evidence="1">
    <location>
        <position position="15"/>
    </location>
    <ligand>
        <name>Mg(2+)</name>
        <dbReference type="ChEBI" id="CHEBI:18420"/>
    </ligand>
</feature>
<feature type="binding site" evidence="1">
    <location>
        <position position="192"/>
    </location>
    <ligand>
        <name>Mg(2+)</name>
        <dbReference type="ChEBI" id="CHEBI:18420"/>
    </ligand>
</feature>
<protein>
    <recommendedName>
        <fullName evidence="1">Phosphoglycolate phosphatase</fullName>
        <shortName evidence="1">PGP</shortName>
        <shortName evidence="1">PGPase</shortName>
        <ecNumber evidence="1">3.1.3.18</ecNumber>
    </recommendedName>
</protein>
<reference key="1">
    <citation type="journal article" date="2005" name="Nucleic Acids Res.">
        <title>Genome dynamics and diversity of Shigella species, the etiologic agents of bacillary dysentery.</title>
        <authorList>
            <person name="Yang F."/>
            <person name="Yang J."/>
            <person name="Zhang X."/>
            <person name="Chen L."/>
            <person name="Jiang Y."/>
            <person name="Yan Y."/>
            <person name="Tang X."/>
            <person name="Wang J."/>
            <person name="Xiong Z."/>
            <person name="Dong J."/>
            <person name="Xue Y."/>
            <person name="Zhu Y."/>
            <person name="Xu X."/>
            <person name="Sun L."/>
            <person name="Chen S."/>
            <person name="Nie H."/>
            <person name="Peng J."/>
            <person name="Xu J."/>
            <person name="Wang Y."/>
            <person name="Yuan Z."/>
            <person name="Wen Y."/>
            <person name="Yao Z."/>
            <person name="Shen Y."/>
            <person name="Qiang B."/>
            <person name="Hou Y."/>
            <person name="Yu J."/>
            <person name="Jin Q."/>
        </authorList>
    </citation>
    <scope>NUCLEOTIDE SEQUENCE [LARGE SCALE GENOMIC DNA]</scope>
    <source>
        <strain>Sb227</strain>
    </source>
</reference>
<evidence type="ECO:0000255" key="1">
    <source>
        <dbReference type="HAMAP-Rule" id="MF_00495"/>
    </source>
</evidence>
<dbReference type="EC" id="3.1.3.18" evidence="1"/>
<dbReference type="EMBL" id="CP000036">
    <property type="protein sequence ID" value="ABB67859.1"/>
    <property type="molecule type" value="Genomic_DNA"/>
</dbReference>
<dbReference type="SMR" id="Q31VP9"/>
<dbReference type="KEGG" id="sbo:SBO_3372"/>
<dbReference type="HOGENOM" id="CLU_045011_19_1_6"/>
<dbReference type="UniPathway" id="UPA00865">
    <property type="reaction ID" value="UER00834"/>
</dbReference>
<dbReference type="Proteomes" id="UP000007067">
    <property type="component" value="Chromosome"/>
</dbReference>
<dbReference type="GO" id="GO:0005829">
    <property type="term" value="C:cytosol"/>
    <property type="evidence" value="ECO:0007669"/>
    <property type="project" value="TreeGrafter"/>
</dbReference>
<dbReference type="GO" id="GO:0046872">
    <property type="term" value="F:metal ion binding"/>
    <property type="evidence" value="ECO:0007669"/>
    <property type="project" value="UniProtKB-KW"/>
</dbReference>
<dbReference type="GO" id="GO:0008967">
    <property type="term" value="F:phosphoglycolate phosphatase activity"/>
    <property type="evidence" value="ECO:0007669"/>
    <property type="project" value="UniProtKB-UniRule"/>
</dbReference>
<dbReference type="GO" id="GO:0005975">
    <property type="term" value="P:carbohydrate metabolic process"/>
    <property type="evidence" value="ECO:0007669"/>
    <property type="project" value="InterPro"/>
</dbReference>
<dbReference type="GO" id="GO:0006281">
    <property type="term" value="P:DNA repair"/>
    <property type="evidence" value="ECO:0007669"/>
    <property type="project" value="TreeGrafter"/>
</dbReference>
<dbReference type="GO" id="GO:0046295">
    <property type="term" value="P:glycolate biosynthetic process"/>
    <property type="evidence" value="ECO:0007669"/>
    <property type="project" value="UniProtKB-UniRule"/>
</dbReference>
<dbReference type="CDD" id="cd16417">
    <property type="entry name" value="HAD_PGPase"/>
    <property type="match status" value="1"/>
</dbReference>
<dbReference type="FunFam" id="1.10.150.240:FF:000003">
    <property type="entry name" value="Phosphoglycolate phosphatase"/>
    <property type="match status" value="1"/>
</dbReference>
<dbReference type="FunFam" id="3.40.50.1000:FF:000022">
    <property type="entry name" value="Phosphoglycolate phosphatase"/>
    <property type="match status" value="1"/>
</dbReference>
<dbReference type="Gene3D" id="3.40.50.1000">
    <property type="entry name" value="HAD superfamily/HAD-like"/>
    <property type="match status" value="1"/>
</dbReference>
<dbReference type="Gene3D" id="1.10.150.240">
    <property type="entry name" value="Putative phosphatase, domain 2"/>
    <property type="match status" value="1"/>
</dbReference>
<dbReference type="HAMAP" id="MF_00495">
    <property type="entry name" value="GPH_hydrolase_bact"/>
    <property type="match status" value="1"/>
</dbReference>
<dbReference type="InterPro" id="IPR050155">
    <property type="entry name" value="HAD-like_hydrolase_sf"/>
</dbReference>
<dbReference type="InterPro" id="IPR036412">
    <property type="entry name" value="HAD-like_sf"/>
</dbReference>
<dbReference type="InterPro" id="IPR006439">
    <property type="entry name" value="HAD-SF_hydro_IA"/>
</dbReference>
<dbReference type="InterPro" id="IPR023214">
    <property type="entry name" value="HAD_sf"/>
</dbReference>
<dbReference type="InterPro" id="IPR023198">
    <property type="entry name" value="PGP-like_dom2"/>
</dbReference>
<dbReference type="InterPro" id="IPR037512">
    <property type="entry name" value="PGPase_prok"/>
</dbReference>
<dbReference type="NCBIfam" id="TIGR01549">
    <property type="entry name" value="HAD-SF-IA-v1"/>
    <property type="match status" value="1"/>
</dbReference>
<dbReference type="NCBIfam" id="TIGR01509">
    <property type="entry name" value="HAD-SF-IA-v3"/>
    <property type="match status" value="1"/>
</dbReference>
<dbReference type="NCBIfam" id="TIGR01449">
    <property type="entry name" value="PGP_bact"/>
    <property type="match status" value="1"/>
</dbReference>
<dbReference type="NCBIfam" id="NF009694">
    <property type="entry name" value="PRK13222.1-1"/>
    <property type="match status" value="1"/>
</dbReference>
<dbReference type="NCBIfam" id="NF009695">
    <property type="entry name" value="PRK13222.1-2"/>
    <property type="match status" value="1"/>
</dbReference>
<dbReference type="NCBIfam" id="NF009697">
    <property type="entry name" value="PRK13222.1-4"/>
    <property type="match status" value="1"/>
</dbReference>
<dbReference type="PANTHER" id="PTHR43434">
    <property type="entry name" value="PHOSPHOGLYCOLATE PHOSPHATASE"/>
    <property type="match status" value="1"/>
</dbReference>
<dbReference type="PANTHER" id="PTHR43434:SF1">
    <property type="entry name" value="PHOSPHOGLYCOLATE PHOSPHATASE"/>
    <property type="match status" value="1"/>
</dbReference>
<dbReference type="Pfam" id="PF00702">
    <property type="entry name" value="Hydrolase"/>
    <property type="match status" value="1"/>
</dbReference>
<dbReference type="PRINTS" id="PR00413">
    <property type="entry name" value="HADHALOGNASE"/>
</dbReference>
<dbReference type="SFLD" id="SFLDG01135">
    <property type="entry name" value="C1.5.6:_HAD__Beta-PGM__Phospha"/>
    <property type="match status" value="1"/>
</dbReference>
<dbReference type="SFLD" id="SFLDG01129">
    <property type="entry name" value="C1.5:_HAD__Beta-PGM__Phosphata"/>
    <property type="match status" value="1"/>
</dbReference>
<dbReference type="SUPFAM" id="SSF56784">
    <property type="entry name" value="HAD-like"/>
    <property type="match status" value="1"/>
</dbReference>
<gene>
    <name type="ordered locus">SBO_3372</name>
</gene>